<name>MANC_ECOLI</name>
<proteinExistence type="inferred from homology"/>
<organism>
    <name type="scientific">Escherichia coli (strain K12)</name>
    <dbReference type="NCBI Taxonomy" id="83333"/>
    <lineage>
        <taxon>Bacteria</taxon>
        <taxon>Pseudomonadati</taxon>
        <taxon>Pseudomonadota</taxon>
        <taxon>Gammaproteobacteria</taxon>
        <taxon>Enterobacterales</taxon>
        <taxon>Enterobacteriaceae</taxon>
        <taxon>Escherichia</taxon>
    </lineage>
</organism>
<feature type="chain" id="PRO_0000194253" description="Mannose-1-phosphate guanylyltransferase">
    <location>
        <begin position="1"/>
        <end position="478"/>
    </location>
</feature>
<feature type="sequence conflict" description="In Ref. 1 and 2." evidence="1" ref="1 2">
    <original>V</original>
    <variation>L</variation>
    <location>
        <position position="325"/>
    </location>
</feature>
<reference key="1">
    <citation type="journal article" date="1994" name="Mol. Biol. Evol.">
        <title>Evidence for effect of random genetic drift on G+C content after lateral transfer of fucose pathway genes to Escherichia coli K-12.</title>
        <authorList>
            <person name="Aoyama K."/>
            <person name="Haase A.M."/>
            <person name="Reeves P.R."/>
        </authorList>
    </citation>
    <scope>NUCLEOTIDE SEQUENCE [GENOMIC DNA]</scope>
    <source>
        <strain>K12</strain>
    </source>
</reference>
<reference key="2">
    <citation type="journal article" date="1996" name="J. Bacteriol.">
        <title>Organization of the Escherichia coli K-12 gene cluster responsible for production of the extracellular polysaccharide colanic acid.</title>
        <authorList>
            <person name="Stevenson G."/>
            <person name="Andrianopoulos K."/>
            <person name="Hobbs M."/>
            <person name="Reeves P.R."/>
        </authorList>
    </citation>
    <scope>NUCLEOTIDE SEQUENCE [GENOMIC DNA]</scope>
    <source>
        <strain>K12</strain>
    </source>
</reference>
<reference key="3">
    <citation type="journal article" date="1996" name="DNA Res.">
        <title>A 460-kb DNA sequence of the Escherichia coli K-12 genome corresponding to the 40.1-50.0 min region on the linkage map.</title>
        <authorList>
            <person name="Itoh T."/>
            <person name="Aiba H."/>
            <person name="Baba T."/>
            <person name="Fujita K."/>
            <person name="Hayashi K."/>
            <person name="Inada T."/>
            <person name="Isono K."/>
            <person name="Kasai H."/>
            <person name="Kimura S."/>
            <person name="Kitakawa M."/>
            <person name="Kitagawa M."/>
            <person name="Makino K."/>
            <person name="Miki T."/>
            <person name="Mizobuchi K."/>
            <person name="Mori H."/>
            <person name="Mori T."/>
            <person name="Motomura K."/>
            <person name="Nakade S."/>
            <person name="Nakamura Y."/>
            <person name="Nashimoto H."/>
            <person name="Nishio Y."/>
            <person name="Oshima T."/>
            <person name="Saito N."/>
            <person name="Sampei G."/>
            <person name="Seki Y."/>
            <person name="Sivasundaram S."/>
            <person name="Tagami H."/>
            <person name="Takeda J."/>
            <person name="Takemoto K."/>
            <person name="Wada C."/>
            <person name="Yamamoto Y."/>
            <person name="Horiuchi T."/>
        </authorList>
    </citation>
    <scope>NUCLEOTIDE SEQUENCE [LARGE SCALE GENOMIC DNA]</scope>
    <source>
        <strain>K12 / W3110 / ATCC 27325 / DSM 5911</strain>
    </source>
</reference>
<reference key="4">
    <citation type="journal article" date="1997" name="Science">
        <title>The complete genome sequence of Escherichia coli K-12.</title>
        <authorList>
            <person name="Blattner F.R."/>
            <person name="Plunkett G. III"/>
            <person name="Bloch C.A."/>
            <person name="Perna N.T."/>
            <person name="Burland V."/>
            <person name="Riley M."/>
            <person name="Collado-Vides J."/>
            <person name="Glasner J.D."/>
            <person name="Rode C.K."/>
            <person name="Mayhew G.F."/>
            <person name="Gregor J."/>
            <person name="Davis N.W."/>
            <person name="Kirkpatrick H.A."/>
            <person name="Goeden M.A."/>
            <person name="Rose D.J."/>
            <person name="Mau B."/>
            <person name="Shao Y."/>
        </authorList>
    </citation>
    <scope>NUCLEOTIDE SEQUENCE [LARGE SCALE GENOMIC DNA]</scope>
    <source>
        <strain>K12 / MG1655 / ATCC 47076</strain>
    </source>
</reference>
<reference key="5">
    <citation type="journal article" date="2006" name="Mol. Syst. Biol.">
        <title>Highly accurate genome sequences of Escherichia coli K-12 strains MG1655 and W3110.</title>
        <authorList>
            <person name="Hayashi K."/>
            <person name="Morooka N."/>
            <person name="Yamamoto Y."/>
            <person name="Fujita K."/>
            <person name="Isono K."/>
            <person name="Choi S."/>
            <person name="Ohtsubo E."/>
            <person name="Baba T."/>
            <person name="Wanner B.L."/>
            <person name="Mori H."/>
            <person name="Horiuchi T."/>
        </authorList>
    </citation>
    <scope>NUCLEOTIDE SEQUENCE [LARGE SCALE GENOMIC DNA]</scope>
    <source>
        <strain>K12 / W3110 / ATCC 27325 / DSM 5911</strain>
    </source>
</reference>
<reference key="6">
    <citation type="submission" date="1991-09" db="EMBL/GenBank/DDBJ databases">
        <title>The nucleotide sequence of the phosphoglucomutase gene in E. coli.</title>
        <authorList>
            <person name="Tal R."/>
            <person name="Eichinger G."/>
            <person name="Emerick A."/>
            <person name="Wong H.C."/>
        </authorList>
    </citation>
    <scope>NUCLEOTIDE SEQUENCE [GENOMIC DNA] OF 327-478</scope>
</reference>
<protein>
    <recommendedName>
        <fullName>Mannose-1-phosphate guanylyltransferase</fullName>
        <ecNumber>2.7.7.13</ecNumber>
    </recommendedName>
    <alternativeName>
        <fullName>GDP-mannose pyrophosphorylase</fullName>
        <shortName>GMP</shortName>
        <shortName>GMPP</shortName>
    </alternativeName>
</protein>
<comment type="function">
    <text>Involved in the biosynthesis of the capsular polysaccharide colanic acid.</text>
</comment>
<comment type="catalytic activity">
    <reaction>
        <text>alpha-D-mannose 1-phosphate + GTP + H(+) = GDP-alpha-D-mannose + diphosphate</text>
        <dbReference type="Rhea" id="RHEA:15229"/>
        <dbReference type="ChEBI" id="CHEBI:15378"/>
        <dbReference type="ChEBI" id="CHEBI:33019"/>
        <dbReference type="ChEBI" id="CHEBI:37565"/>
        <dbReference type="ChEBI" id="CHEBI:57527"/>
        <dbReference type="ChEBI" id="CHEBI:58409"/>
        <dbReference type="EC" id="2.7.7.13"/>
    </reaction>
</comment>
<comment type="pathway">
    <text>Nucleotide-sugar biosynthesis; GDP-alpha-D-mannose biosynthesis; GDP-alpha-D-mannose from alpha-D-mannose 1-phosphate (GTP route): step 1/1.</text>
</comment>
<comment type="similarity">
    <text evidence="1">Belongs to the mannose-6-phosphate isomerase type 2 family.</text>
</comment>
<evidence type="ECO:0000305" key="1"/>
<dbReference type="EC" id="2.7.7.13"/>
<dbReference type="EMBL" id="U38473">
    <property type="protein sequence ID" value="AAC77846.1"/>
    <property type="molecule type" value="Genomic_DNA"/>
</dbReference>
<dbReference type="EMBL" id="U00096">
    <property type="protein sequence ID" value="AAC75110.1"/>
    <property type="molecule type" value="Genomic_DNA"/>
</dbReference>
<dbReference type="EMBL" id="AP009048">
    <property type="protein sequence ID" value="BAA15905.1"/>
    <property type="molecule type" value="Genomic_DNA"/>
</dbReference>
<dbReference type="EMBL" id="M77127">
    <property type="protein sequence ID" value="AAA02893.1"/>
    <property type="molecule type" value="Genomic_DNA"/>
</dbReference>
<dbReference type="PIR" id="H64970">
    <property type="entry name" value="H64970"/>
</dbReference>
<dbReference type="RefSeq" id="NP_416553.1">
    <property type="nucleotide sequence ID" value="NC_000913.3"/>
</dbReference>
<dbReference type="RefSeq" id="WP_000079274.1">
    <property type="nucleotide sequence ID" value="NZ_LN832404.1"/>
</dbReference>
<dbReference type="SMR" id="P24174"/>
<dbReference type="BioGRID" id="4263312">
    <property type="interactions" value="196"/>
</dbReference>
<dbReference type="FunCoup" id="P24174">
    <property type="interactions" value="263"/>
</dbReference>
<dbReference type="IntAct" id="P24174">
    <property type="interactions" value="5"/>
</dbReference>
<dbReference type="STRING" id="511145.b2049"/>
<dbReference type="PaxDb" id="511145-b2049"/>
<dbReference type="EnsemblBacteria" id="AAC75110">
    <property type="protein sequence ID" value="AAC75110"/>
    <property type="gene ID" value="b2049"/>
</dbReference>
<dbReference type="GeneID" id="946580"/>
<dbReference type="KEGG" id="ecj:JW2034"/>
<dbReference type="KEGG" id="eco:b2049"/>
<dbReference type="KEGG" id="ecoc:C3026_11535"/>
<dbReference type="PATRIC" id="fig|1411691.4.peg.202"/>
<dbReference type="EchoBASE" id="EB0159"/>
<dbReference type="eggNOG" id="COG0662">
    <property type="taxonomic scope" value="Bacteria"/>
</dbReference>
<dbReference type="eggNOG" id="COG0836">
    <property type="taxonomic scope" value="Bacteria"/>
</dbReference>
<dbReference type="HOGENOM" id="CLU_035527_1_0_6"/>
<dbReference type="InParanoid" id="P24174"/>
<dbReference type="OMA" id="WSDLGNF"/>
<dbReference type="OrthoDB" id="9806359at2"/>
<dbReference type="PhylomeDB" id="P24174"/>
<dbReference type="BioCyc" id="EcoCyc:MANNPGUANYLTRANGDP-MONOMER"/>
<dbReference type="BioCyc" id="MetaCyc:MANNPGUANYLTRANGDP-MONOMER"/>
<dbReference type="UniPathway" id="UPA00126">
    <property type="reaction ID" value="UER00930"/>
</dbReference>
<dbReference type="PRO" id="PR:P24174"/>
<dbReference type="Proteomes" id="UP000000625">
    <property type="component" value="Chromosome"/>
</dbReference>
<dbReference type="GO" id="GO:0005525">
    <property type="term" value="F:GTP binding"/>
    <property type="evidence" value="ECO:0007669"/>
    <property type="project" value="UniProtKB-KW"/>
</dbReference>
<dbReference type="GO" id="GO:0004475">
    <property type="term" value="F:mannose-1-phosphate guanylyltransferase (GTP) activity"/>
    <property type="evidence" value="ECO:0000314"/>
    <property type="project" value="EcoCyc"/>
</dbReference>
<dbReference type="GO" id="GO:0009242">
    <property type="term" value="P:colanic acid biosynthetic process"/>
    <property type="evidence" value="ECO:0000315"/>
    <property type="project" value="EcoCyc"/>
</dbReference>
<dbReference type="GO" id="GO:0009298">
    <property type="term" value="P:GDP-mannose biosynthetic process"/>
    <property type="evidence" value="ECO:0000269"/>
    <property type="project" value="EcoCyc"/>
</dbReference>
<dbReference type="GO" id="GO:0006972">
    <property type="term" value="P:hyperosmotic response"/>
    <property type="evidence" value="ECO:0000270"/>
    <property type="project" value="EcoCyc"/>
</dbReference>
<dbReference type="GO" id="GO:0009103">
    <property type="term" value="P:lipopolysaccharide biosynthetic process"/>
    <property type="evidence" value="ECO:0007669"/>
    <property type="project" value="UniProtKB-KW"/>
</dbReference>
<dbReference type="CDD" id="cd02213">
    <property type="entry name" value="cupin_PMI_typeII_C"/>
    <property type="match status" value="1"/>
</dbReference>
<dbReference type="CDD" id="cd02509">
    <property type="entry name" value="GDP-M1P_Guanylyltransferase"/>
    <property type="match status" value="1"/>
</dbReference>
<dbReference type="FunFam" id="3.90.550.10:FF:000046">
    <property type="entry name" value="Mannose-1-phosphate guanylyltransferase (GDP)"/>
    <property type="match status" value="1"/>
</dbReference>
<dbReference type="FunFam" id="2.60.120.10:FF:000032">
    <property type="entry name" value="Mannose-1-phosphate guanylyltransferase/mannose-6-phosphate isomerase"/>
    <property type="match status" value="1"/>
</dbReference>
<dbReference type="Gene3D" id="2.60.120.10">
    <property type="entry name" value="Jelly Rolls"/>
    <property type="match status" value="1"/>
</dbReference>
<dbReference type="Gene3D" id="3.90.550.10">
    <property type="entry name" value="Spore Coat Polysaccharide Biosynthesis Protein SpsA, Chain A"/>
    <property type="match status" value="1"/>
</dbReference>
<dbReference type="InterPro" id="IPR049577">
    <property type="entry name" value="GMPP_N"/>
</dbReference>
<dbReference type="InterPro" id="IPR006375">
    <property type="entry name" value="Man1P_GuaTrfase/Man6P_Isoase"/>
</dbReference>
<dbReference type="InterPro" id="IPR001538">
    <property type="entry name" value="Man6P_isomerase-2_C"/>
</dbReference>
<dbReference type="InterPro" id="IPR054566">
    <property type="entry name" value="ManC/GMP-like_b-helix"/>
</dbReference>
<dbReference type="InterPro" id="IPR051161">
    <property type="entry name" value="Mannose-6P_isomerase_type2"/>
</dbReference>
<dbReference type="InterPro" id="IPR005835">
    <property type="entry name" value="NTP_transferase_dom"/>
</dbReference>
<dbReference type="InterPro" id="IPR029044">
    <property type="entry name" value="Nucleotide-diphossugar_trans"/>
</dbReference>
<dbReference type="InterPro" id="IPR014710">
    <property type="entry name" value="RmlC-like_jellyroll"/>
</dbReference>
<dbReference type="InterPro" id="IPR011051">
    <property type="entry name" value="RmlC_Cupin_sf"/>
</dbReference>
<dbReference type="NCBIfam" id="TIGR01479">
    <property type="entry name" value="GMP_PMI"/>
    <property type="match status" value="1"/>
</dbReference>
<dbReference type="NCBIfam" id="NF012004">
    <property type="entry name" value="PRK15460.1"/>
    <property type="match status" value="1"/>
</dbReference>
<dbReference type="PANTHER" id="PTHR46390">
    <property type="entry name" value="MANNOSE-1-PHOSPHATE GUANYLYLTRANSFERASE"/>
    <property type="match status" value="1"/>
</dbReference>
<dbReference type="PANTHER" id="PTHR46390:SF1">
    <property type="entry name" value="MANNOSE-1-PHOSPHATE GUANYLYLTRANSFERASE"/>
    <property type="match status" value="1"/>
</dbReference>
<dbReference type="Pfam" id="PF22640">
    <property type="entry name" value="ManC_GMP_beta-helix"/>
    <property type="match status" value="1"/>
</dbReference>
<dbReference type="Pfam" id="PF01050">
    <property type="entry name" value="MannoseP_isomer"/>
    <property type="match status" value="1"/>
</dbReference>
<dbReference type="Pfam" id="PF00483">
    <property type="entry name" value="NTP_transferase"/>
    <property type="match status" value="1"/>
</dbReference>
<dbReference type="SUPFAM" id="SSF53448">
    <property type="entry name" value="Nucleotide-diphospho-sugar transferases"/>
    <property type="match status" value="1"/>
</dbReference>
<dbReference type="SUPFAM" id="SSF51182">
    <property type="entry name" value="RmlC-like cupins"/>
    <property type="match status" value="1"/>
</dbReference>
<accession>P24174</accession>
<accession>P78084</accession>
<sequence>MAQSKLYPVVMAGGSGSRLWPLSRVLYPKQFLCLKGDLTMLQTTICRLNGVECESPVVICNEQHRFIVAEQLRQLNKLTENIILEPAGRNTAPAIALAALAAKRHSPESDPLMLVLAADHVIADEDAFRAAVRNAMPYAEAGKLVTFGIVPDLPETGYGYIRRGEVSAGEQDMVAFEVAQFVEKPNLETAQAYVASGEYYWNSGMFLFRAGRYLEELKKYRPDILDACEKAMSAVDPDLNFIRVDEEAFLACPEESVDYAVMERTADAVVVPMDAGWSDVGSWSSLWEISAHTAEGNVCHGDVINHKTENSYVYAESGLVTTVGVKDLVVVQTKDAVLIADRNAVQDVKKVVEQIKADGRHEHRVHREVYRPWGKYDSIDAGDRYQVKRITVKPGEGLSVQMHHHRAEHWVVVAGTAKVTIDGDIKLLGENESIYIPLGATHCLENPGKIPLDLIEVRSGSYLEEDDVVRFADRYGRV</sequence>
<gene>
    <name type="primary">manC</name>
    <name type="synonym">cpsB</name>
    <name type="synonym">rfbM</name>
    <name type="ordered locus">b2049</name>
    <name type="ordered locus">JW2034</name>
</gene>
<keyword id="KW-0972">Capsule biogenesis/degradation</keyword>
<keyword id="KW-0342">GTP-binding</keyword>
<keyword id="KW-0448">Lipopolysaccharide biosynthesis</keyword>
<keyword id="KW-0547">Nucleotide-binding</keyword>
<keyword id="KW-0548">Nucleotidyltransferase</keyword>
<keyword id="KW-1185">Reference proteome</keyword>
<keyword id="KW-0808">Transferase</keyword>